<name>TRPB_LEIXX</name>
<dbReference type="EC" id="4.2.1.20" evidence="1"/>
<dbReference type="EMBL" id="AE016822">
    <property type="protein sequence ID" value="AAT88978.1"/>
    <property type="molecule type" value="Genomic_DNA"/>
</dbReference>
<dbReference type="RefSeq" id="WP_011185974.1">
    <property type="nucleotide sequence ID" value="NC_006087.1"/>
</dbReference>
<dbReference type="SMR" id="Q6AF67"/>
<dbReference type="STRING" id="281090.Lxx11290"/>
<dbReference type="KEGG" id="lxx:Lxx11290"/>
<dbReference type="eggNOG" id="COG0133">
    <property type="taxonomic scope" value="Bacteria"/>
</dbReference>
<dbReference type="HOGENOM" id="CLU_016734_3_1_11"/>
<dbReference type="UniPathway" id="UPA00035">
    <property type="reaction ID" value="UER00044"/>
</dbReference>
<dbReference type="Proteomes" id="UP000001306">
    <property type="component" value="Chromosome"/>
</dbReference>
<dbReference type="GO" id="GO:0005737">
    <property type="term" value="C:cytoplasm"/>
    <property type="evidence" value="ECO:0007669"/>
    <property type="project" value="TreeGrafter"/>
</dbReference>
<dbReference type="GO" id="GO:0004834">
    <property type="term" value="F:tryptophan synthase activity"/>
    <property type="evidence" value="ECO:0007669"/>
    <property type="project" value="UniProtKB-UniRule"/>
</dbReference>
<dbReference type="CDD" id="cd06446">
    <property type="entry name" value="Trp-synth_B"/>
    <property type="match status" value="1"/>
</dbReference>
<dbReference type="FunFam" id="3.40.50.1100:FF:000001">
    <property type="entry name" value="Tryptophan synthase beta chain"/>
    <property type="match status" value="1"/>
</dbReference>
<dbReference type="FunFam" id="3.40.50.1100:FF:000004">
    <property type="entry name" value="Tryptophan synthase beta chain"/>
    <property type="match status" value="1"/>
</dbReference>
<dbReference type="Gene3D" id="3.40.50.1100">
    <property type="match status" value="2"/>
</dbReference>
<dbReference type="HAMAP" id="MF_00133">
    <property type="entry name" value="Trp_synth_beta"/>
    <property type="match status" value="1"/>
</dbReference>
<dbReference type="InterPro" id="IPR006653">
    <property type="entry name" value="Trp_synth_b_CS"/>
</dbReference>
<dbReference type="InterPro" id="IPR006654">
    <property type="entry name" value="Trp_synth_beta"/>
</dbReference>
<dbReference type="InterPro" id="IPR023026">
    <property type="entry name" value="Trp_synth_beta/beta-like"/>
</dbReference>
<dbReference type="InterPro" id="IPR001926">
    <property type="entry name" value="TrpB-like_PALP"/>
</dbReference>
<dbReference type="InterPro" id="IPR036052">
    <property type="entry name" value="TrpB-like_PALP_sf"/>
</dbReference>
<dbReference type="NCBIfam" id="TIGR00263">
    <property type="entry name" value="trpB"/>
    <property type="match status" value="1"/>
</dbReference>
<dbReference type="PANTHER" id="PTHR48077:SF3">
    <property type="entry name" value="TRYPTOPHAN SYNTHASE"/>
    <property type="match status" value="1"/>
</dbReference>
<dbReference type="PANTHER" id="PTHR48077">
    <property type="entry name" value="TRYPTOPHAN SYNTHASE-RELATED"/>
    <property type="match status" value="1"/>
</dbReference>
<dbReference type="Pfam" id="PF00291">
    <property type="entry name" value="PALP"/>
    <property type="match status" value="1"/>
</dbReference>
<dbReference type="PIRSF" id="PIRSF001413">
    <property type="entry name" value="Trp_syn_beta"/>
    <property type="match status" value="1"/>
</dbReference>
<dbReference type="SUPFAM" id="SSF53686">
    <property type="entry name" value="Tryptophan synthase beta subunit-like PLP-dependent enzymes"/>
    <property type="match status" value="1"/>
</dbReference>
<dbReference type="PROSITE" id="PS00168">
    <property type="entry name" value="TRP_SYNTHASE_BETA"/>
    <property type="match status" value="1"/>
</dbReference>
<proteinExistence type="inferred from homology"/>
<protein>
    <recommendedName>
        <fullName evidence="1">Tryptophan synthase beta chain</fullName>
        <ecNumber evidence="1">4.2.1.20</ecNumber>
    </recommendedName>
</protein>
<feature type="chain" id="PRO_0000098961" description="Tryptophan synthase beta chain">
    <location>
        <begin position="1"/>
        <end position="403"/>
    </location>
</feature>
<feature type="modified residue" description="N6-(pyridoxal phosphate)lysine" evidence="1">
    <location>
        <position position="90"/>
    </location>
</feature>
<keyword id="KW-0028">Amino-acid biosynthesis</keyword>
<keyword id="KW-0057">Aromatic amino acid biosynthesis</keyword>
<keyword id="KW-0456">Lyase</keyword>
<keyword id="KW-0663">Pyridoxal phosphate</keyword>
<keyword id="KW-1185">Reference proteome</keyword>
<keyword id="KW-0822">Tryptophan biosynthesis</keyword>
<gene>
    <name evidence="1" type="primary">trpB</name>
    <name type="ordered locus">Lxx11290</name>
</gene>
<sequence length="403" mass="42794">MPLRSEEGPYFGDFGGRFVPESLVAALDELSAAWEAAKADPAFHVQLDELHRSYTGRPSIVTEVPRFAEHGGGARLLLKREDLNHTGSHKINNVLGQAILTKRIGKTRVIAETGAGQHGVAIATAAALFGLSCTIYMGEVDTERQALNVARMRLLGAEVVAVKTGSRTLKDAINDAMRDWVTNVETTNYIFGTVAGPHPFPTMVRDLQRIIGEEAREQVLALTGRLPDAVAACVGGGSNAMGIFHAFLDDENVRLVGFEAGGEGADTPRHAATITKGRPGVLHGARSLLLQDEDGQTIESHSISAGLDYPGVGPEHAWLAAIGRAEYRPVSDAEAMEALRLLSRTEGIIPAIESAHALAGALDLGRELGPEGVVLVSLSGRGDKDMETAGRYFGLIEEGAVQS</sequence>
<evidence type="ECO:0000255" key="1">
    <source>
        <dbReference type="HAMAP-Rule" id="MF_00133"/>
    </source>
</evidence>
<accession>Q6AF67</accession>
<organism>
    <name type="scientific">Leifsonia xyli subsp. xyli (strain CTCB07)</name>
    <dbReference type="NCBI Taxonomy" id="281090"/>
    <lineage>
        <taxon>Bacteria</taxon>
        <taxon>Bacillati</taxon>
        <taxon>Actinomycetota</taxon>
        <taxon>Actinomycetes</taxon>
        <taxon>Micrococcales</taxon>
        <taxon>Microbacteriaceae</taxon>
        <taxon>Leifsonia</taxon>
    </lineage>
</organism>
<reference key="1">
    <citation type="journal article" date="2004" name="Mol. Plant Microbe Interact.">
        <title>The genome sequence of the Gram-positive sugarcane pathogen Leifsonia xyli subsp. xyli.</title>
        <authorList>
            <person name="Monteiro-Vitorello C.B."/>
            <person name="Camargo L.E.A."/>
            <person name="Van Sluys M.A."/>
            <person name="Kitajima J.P."/>
            <person name="Truffi D."/>
            <person name="do Amaral A.M."/>
            <person name="Harakava R."/>
            <person name="de Oliveira J.C.F."/>
            <person name="Wood D."/>
            <person name="de Oliveira M.C."/>
            <person name="Miyaki C.Y."/>
            <person name="Takita M.A."/>
            <person name="da Silva A.C.R."/>
            <person name="Furlan L.R."/>
            <person name="Carraro D.M."/>
            <person name="Camarotte G."/>
            <person name="Almeida N.F. Jr."/>
            <person name="Carrer H."/>
            <person name="Coutinho L.L."/>
            <person name="El-Dorry H.A."/>
            <person name="Ferro M.I.T."/>
            <person name="Gagliardi P.R."/>
            <person name="Giglioti E."/>
            <person name="Goldman M.H.S."/>
            <person name="Goldman G.H."/>
            <person name="Kimura E.T."/>
            <person name="Ferro E.S."/>
            <person name="Kuramae E.E."/>
            <person name="Lemos E.G.M."/>
            <person name="Lemos M.V.F."/>
            <person name="Mauro S.M.Z."/>
            <person name="Machado M.A."/>
            <person name="Marino C.L."/>
            <person name="Menck C.F."/>
            <person name="Nunes L.R."/>
            <person name="Oliveira R.C."/>
            <person name="Pereira G.G."/>
            <person name="Siqueira W."/>
            <person name="de Souza A.A."/>
            <person name="Tsai S.M."/>
            <person name="Zanca A.S."/>
            <person name="Simpson A.J.G."/>
            <person name="Brumbley S.M."/>
            <person name="Setubal J.C."/>
        </authorList>
    </citation>
    <scope>NUCLEOTIDE SEQUENCE [LARGE SCALE GENOMIC DNA]</scope>
    <source>
        <strain>CTCB07</strain>
    </source>
</reference>
<comment type="function">
    <text evidence="1">The beta subunit is responsible for the synthesis of L-tryptophan from indole and L-serine.</text>
</comment>
<comment type="catalytic activity">
    <reaction evidence="1">
        <text>(1S,2R)-1-C-(indol-3-yl)glycerol 3-phosphate + L-serine = D-glyceraldehyde 3-phosphate + L-tryptophan + H2O</text>
        <dbReference type="Rhea" id="RHEA:10532"/>
        <dbReference type="ChEBI" id="CHEBI:15377"/>
        <dbReference type="ChEBI" id="CHEBI:33384"/>
        <dbReference type="ChEBI" id="CHEBI:57912"/>
        <dbReference type="ChEBI" id="CHEBI:58866"/>
        <dbReference type="ChEBI" id="CHEBI:59776"/>
        <dbReference type="EC" id="4.2.1.20"/>
    </reaction>
</comment>
<comment type="cofactor">
    <cofactor evidence="1">
        <name>pyridoxal 5'-phosphate</name>
        <dbReference type="ChEBI" id="CHEBI:597326"/>
    </cofactor>
</comment>
<comment type="pathway">
    <text evidence="1">Amino-acid biosynthesis; L-tryptophan biosynthesis; L-tryptophan from chorismate: step 5/5.</text>
</comment>
<comment type="subunit">
    <text evidence="1">Tetramer of two alpha and two beta chains.</text>
</comment>
<comment type="similarity">
    <text evidence="1">Belongs to the TrpB family.</text>
</comment>